<name>IMPA3_BOVIN</name>
<reference key="1">
    <citation type="submission" date="2005-09" db="EMBL/GenBank/DDBJ databases">
        <authorList>
            <consortium name="NIH - Mammalian Gene Collection (MGC) project"/>
        </authorList>
    </citation>
    <scope>NUCLEOTIDE SEQUENCE [LARGE SCALE MRNA]</scope>
    <source>
        <strain>Hereford</strain>
        <tissue>Ascending colon</tissue>
    </source>
</reference>
<protein>
    <recommendedName>
        <fullName evidence="2">Golgi-resident adenosine 3',5'-bisphosphate 3'-phosphatase</fullName>
        <shortName evidence="2">Golgi-resident PAP phosphatase</shortName>
        <shortName evidence="2">gPAPP</shortName>
        <ecNumber evidence="2">3.1.3.7</ecNumber>
    </recommendedName>
    <alternativeName>
        <fullName>3'(2'), 5'-bisphosphate nucleotidase 2</fullName>
    </alternativeName>
    <alternativeName>
        <fullName evidence="2">Inositol monophosphatase domain-containing protein 1</fullName>
    </alternativeName>
    <alternativeName>
        <fullName evidence="3">Myo-inositol monophosphatase A3</fullName>
    </alternativeName>
    <alternativeName>
        <fullName evidence="2">Phosphoadenosine phosphate 3'-nucleotidase</fullName>
    </alternativeName>
</protein>
<evidence type="ECO:0000250" key="1"/>
<evidence type="ECO:0000250" key="2">
    <source>
        <dbReference type="UniProtKB" id="Q80V26"/>
    </source>
</evidence>
<evidence type="ECO:0000250" key="3">
    <source>
        <dbReference type="UniProtKB" id="Q9NX62"/>
    </source>
</evidence>
<evidence type="ECO:0000250" key="4">
    <source>
        <dbReference type="UniProtKB" id="Q9Z1N4"/>
    </source>
</evidence>
<evidence type="ECO:0000255" key="5"/>
<evidence type="ECO:0000256" key="6">
    <source>
        <dbReference type="SAM" id="MobiDB-lite"/>
    </source>
</evidence>
<evidence type="ECO:0000305" key="7"/>
<comment type="function">
    <text evidence="2">Exhibits 3'-nucleotidase activity toward adenosine 3',5'-bisphosphate (PAP), namely hydrolyzes adenosine 3',5'-bisphosphate into adenosine 5'-monophosphate (AMP) and a phosphate. May play a role in the formation of skeletal elements derived through endochondral ossification, possibly by clearing adenosine 3',5'-bisphosphate produced by Golgi sulfotransferases during glycosaminoglycan sulfation. Has no activity toward 3'-phosphoadenosine 5'-phosphosulfate (PAPS) or inositol phosphate (IP) substrates including I(1)P, I(1,4)P2, I(1,3,4)P3, I(1,4,5)P3 and I(1,3,4,5)P4.</text>
</comment>
<comment type="catalytic activity">
    <reaction evidence="2">
        <text>adenosine 3',5'-bisphosphate + H2O = AMP + phosphate</text>
        <dbReference type="Rhea" id="RHEA:10040"/>
        <dbReference type="ChEBI" id="CHEBI:15377"/>
        <dbReference type="ChEBI" id="CHEBI:43474"/>
        <dbReference type="ChEBI" id="CHEBI:58343"/>
        <dbReference type="ChEBI" id="CHEBI:456215"/>
        <dbReference type="EC" id="3.1.3.7"/>
    </reaction>
</comment>
<comment type="cofactor">
    <cofactor evidence="1">
        <name>Mg(2+)</name>
        <dbReference type="ChEBI" id="CHEBI:18420"/>
    </cofactor>
</comment>
<comment type="activity regulation">
    <text evidence="2">Strongly inhibited by lithium.</text>
</comment>
<comment type="pathway">
    <text evidence="2">Sulfur metabolism.</text>
</comment>
<comment type="subcellular location">
    <subcellularLocation>
        <location evidence="2 3">Golgi apparatus</location>
    </subcellularLocation>
    <subcellularLocation>
        <location evidence="2 3">Golgi apparatus</location>
        <location evidence="2 3">trans-Golgi network membrane</location>
        <topology evidence="3">Single-pass type II membrane protein</topology>
    </subcellularLocation>
    <text evidence="3">The catalytic core is predicted to reside within the Golgi lumen.</text>
</comment>
<comment type="PTM">
    <text evidence="3">Contains N-linked glycan resistant to endoglycosydase H.</text>
</comment>
<comment type="similarity">
    <text evidence="7">Belongs to the inositol monophosphatase superfamily.</text>
</comment>
<gene>
    <name type="primary">BPNT2</name>
    <name type="synonym">IMPA3</name>
    <name type="synonym">IMPAD1</name>
</gene>
<dbReference type="EC" id="3.1.3.7" evidence="2"/>
<dbReference type="EMBL" id="BC105514">
    <property type="protein sequence ID" value="AAI05515.1"/>
    <property type="molecule type" value="mRNA"/>
</dbReference>
<dbReference type="RefSeq" id="NP_001039800.1">
    <property type="nucleotide sequence ID" value="NM_001046335.1"/>
</dbReference>
<dbReference type="SMR" id="Q2KJ53"/>
<dbReference type="FunCoup" id="Q2KJ53">
    <property type="interactions" value="340"/>
</dbReference>
<dbReference type="STRING" id="9913.ENSBTAP00000020766"/>
<dbReference type="GlyCosmos" id="Q2KJ53">
    <property type="glycosylation" value="1 site, No reported glycans"/>
</dbReference>
<dbReference type="GlyGen" id="Q2KJ53">
    <property type="glycosylation" value="1 site"/>
</dbReference>
<dbReference type="PaxDb" id="9913-ENSBTAP00000020766"/>
<dbReference type="GeneID" id="532797"/>
<dbReference type="KEGG" id="bta:532797"/>
<dbReference type="CTD" id="54928"/>
<dbReference type="eggNOG" id="KOG3853">
    <property type="taxonomic scope" value="Eukaryota"/>
</dbReference>
<dbReference type="HOGENOM" id="CLU_034742_0_0_1"/>
<dbReference type="InParanoid" id="Q2KJ53"/>
<dbReference type="OrthoDB" id="74460at2759"/>
<dbReference type="TreeFam" id="TF314300"/>
<dbReference type="Proteomes" id="UP000009136">
    <property type="component" value="Unplaced"/>
</dbReference>
<dbReference type="GO" id="GO:0012505">
    <property type="term" value="C:endomembrane system"/>
    <property type="evidence" value="ECO:0000318"/>
    <property type="project" value="GO_Central"/>
</dbReference>
<dbReference type="GO" id="GO:0032588">
    <property type="term" value="C:trans-Golgi network membrane"/>
    <property type="evidence" value="ECO:0000250"/>
    <property type="project" value="UniProtKB"/>
</dbReference>
<dbReference type="GO" id="GO:0008441">
    <property type="term" value="F:3'(2'),5'-bisphosphate nucleotidase activity"/>
    <property type="evidence" value="ECO:0007669"/>
    <property type="project" value="UniProtKB-EC"/>
</dbReference>
<dbReference type="GO" id="GO:0097657">
    <property type="term" value="F:3',5'-nucleotide bisphosphate phosphatase activity"/>
    <property type="evidence" value="ECO:0000250"/>
    <property type="project" value="UniProtKB"/>
</dbReference>
<dbReference type="GO" id="GO:0008254">
    <property type="term" value="F:3'-nucleotidase activity"/>
    <property type="evidence" value="ECO:0000318"/>
    <property type="project" value="GO_Central"/>
</dbReference>
<dbReference type="GO" id="GO:0046872">
    <property type="term" value="F:metal ion binding"/>
    <property type="evidence" value="ECO:0007669"/>
    <property type="project" value="UniProtKB-KW"/>
</dbReference>
<dbReference type="GO" id="GO:0046854">
    <property type="term" value="P:phosphatidylinositol phosphate biosynthetic process"/>
    <property type="evidence" value="ECO:0007669"/>
    <property type="project" value="InterPro"/>
</dbReference>
<dbReference type="GO" id="GO:0001501">
    <property type="term" value="P:skeletal system development"/>
    <property type="evidence" value="ECO:0000318"/>
    <property type="project" value="GO_Central"/>
</dbReference>
<dbReference type="CDD" id="cd01640">
    <property type="entry name" value="IPPase"/>
    <property type="match status" value="1"/>
</dbReference>
<dbReference type="FunFam" id="3.30.540.10:FF:000012">
    <property type="entry name" value="Blast:Putative inositol monophosphatase 3"/>
    <property type="match status" value="1"/>
</dbReference>
<dbReference type="FunFam" id="3.40.190.80:FF:000007">
    <property type="entry name" value="Blast:Putative inositol monophosphatase 3"/>
    <property type="match status" value="1"/>
</dbReference>
<dbReference type="Gene3D" id="3.40.190.80">
    <property type="match status" value="1"/>
</dbReference>
<dbReference type="Gene3D" id="3.30.540.10">
    <property type="entry name" value="Fructose-1,6-Bisphosphatase, subunit A, domain 1"/>
    <property type="match status" value="1"/>
</dbReference>
<dbReference type="InterPro" id="IPR050725">
    <property type="entry name" value="CysQ/Inositol_MonoPase"/>
</dbReference>
<dbReference type="InterPro" id="IPR000760">
    <property type="entry name" value="Inositol_monophosphatase-like"/>
</dbReference>
<dbReference type="InterPro" id="IPR020550">
    <property type="entry name" value="Inositol_monophosphatase_CS"/>
</dbReference>
<dbReference type="PANTHER" id="PTHR43028">
    <property type="entry name" value="3'(2'),5'-BISPHOSPHATE NUCLEOTIDASE 1"/>
    <property type="match status" value="1"/>
</dbReference>
<dbReference type="PANTHER" id="PTHR43028:SF6">
    <property type="entry name" value="GOLGI-RESIDENT ADENOSINE 3',5'-BISPHOSPHATE 3'-PHOSPHATASE"/>
    <property type="match status" value="1"/>
</dbReference>
<dbReference type="Pfam" id="PF00459">
    <property type="entry name" value="Inositol_P"/>
    <property type="match status" value="1"/>
</dbReference>
<dbReference type="SUPFAM" id="SSF56655">
    <property type="entry name" value="Carbohydrate phosphatase"/>
    <property type="match status" value="1"/>
</dbReference>
<dbReference type="PROSITE" id="PS00630">
    <property type="entry name" value="IMP_2"/>
    <property type="match status" value="1"/>
</dbReference>
<feature type="chain" id="PRO_0000289040" description="Golgi-resident adenosine 3',5'-bisphosphate 3'-phosphatase">
    <location>
        <begin position="1"/>
        <end position="362"/>
    </location>
</feature>
<feature type="topological domain" description="Cytoplasmic" evidence="5">
    <location>
        <begin position="1"/>
        <end position="12"/>
    </location>
</feature>
<feature type="transmembrane region" description="Helical" evidence="5">
    <location>
        <begin position="13"/>
        <end position="33"/>
    </location>
</feature>
<feature type="topological domain" description="Lumenal" evidence="5">
    <location>
        <begin position="34"/>
        <end position="362"/>
    </location>
</feature>
<feature type="region of interest" description="Disordered" evidence="6">
    <location>
        <begin position="88"/>
        <end position="109"/>
    </location>
</feature>
<feature type="active site" description="Proton acceptor" evidence="4">
    <location>
        <position position="113"/>
    </location>
</feature>
<feature type="active site" description="Proton acceptor" evidence="4">
    <location>
        <position position="182"/>
    </location>
</feature>
<feature type="binding site" evidence="4">
    <location>
        <position position="136"/>
    </location>
    <ligand>
        <name>Mg(2+)</name>
        <dbReference type="ChEBI" id="CHEBI:18420"/>
        <label>1</label>
    </ligand>
</feature>
<feature type="binding site" evidence="4">
    <location>
        <position position="136"/>
    </location>
    <ligand>
        <name>Mg(2+)</name>
        <dbReference type="ChEBI" id="CHEBI:18420"/>
        <label>3</label>
    </ligand>
</feature>
<feature type="binding site" evidence="4">
    <location>
        <position position="177"/>
    </location>
    <ligand>
        <name>Mg(2+)</name>
        <dbReference type="ChEBI" id="CHEBI:18420"/>
        <label>1</label>
    </ligand>
</feature>
<feature type="binding site" evidence="4">
    <location>
        <position position="177"/>
    </location>
    <ligand>
        <name>Mg(2+)</name>
        <dbReference type="ChEBI" id="CHEBI:18420"/>
        <label>2</label>
    </ligand>
</feature>
<feature type="binding site" evidence="4">
    <location>
        <position position="179"/>
    </location>
    <ligand>
        <name>Mg(2+)</name>
        <dbReference type="ChEBI" id="CHEBI:18420"/>
        <label>1</label>
    </ligand>
</feature>
<feature type="binding site" evidence="4">
    <location>
        <position position="180"/>
    </location>
    <ligand>
        <name>Mg(2+)</name>
        <dbReference type="ChEBI" id="CHEBI:18420"/>
        <label>2</label>
    </ligand>
</feature>
<feature type="binding site" evidence="4">
    <location>
        <position position="245"/>
    </location>
    <ligand>
        <name>AMP</name>
        <dbReference type="ChEBI" id="CHEBI:456215"/>
    </ligand>
</feature>
<feature type="binding site" evidence="4">
    <location>
        <position position="248"/>
    </location>
    <ligand>
        <name>AMP</name>
        <dbReference type="ChEBI" id="CHEBI:456215"/>
    </ligand>
</feature>
<feature type="binding site" evidence="4">
    <location>
        <position position="271"/>
    </location>
    <ligand>
        <name>AMP</name>
        <dbReference type="ChEBI" id="CHEBI:456215"/>
    </ligand>
</feature>
<feature type="binding site" evidence="4">
    <location>
        <position position="275"/>
    </location>
    <ligand>
        <name>AMP</name>
        <dbReference type="ChEBI" id="CHEBI:456215"/>
    </ligand>
</feature>
<feature type="binding site" evidence="4">
    <location>
        <position position="303"/>
    </location>
    <ligand>
        <name>Mg(2+)</name>
        <dbReference type="ChEBI" id="CHEBI:18420"/>
        <label>2</label>
    </ligand>
</feature>
<feature type="modified residue" description="N-acetylmethionine" evidence="3">
    <location>
        <position position="1"/>
    </location>
</feature>
<feature type="glycosylation site" description="N-linked (GlcNAc...) asparagine" evidence="5">
    <location>
        <position position="262"/>
    </location>
</feature>
<proteinExistence type="evidence at transcript level"/>
<sequence length="362" mass="38924">MAPMGIRLSPLGVAVFCLLGLGVLYHLYSGFLAGRFSLFGLGGEPGGGAAGPAGPAASADGGTVDLREMLAVSVLAAVRGGEEVRRVRESNVLHEKSKGKTREGADDKMTSGDVLSNRKMFYLLKTAFPSVQINTEEHVDASDQEVILWDRKIPEDILKEIATPQEVPAESVTVWIDPLDATQEYTEDLRKYVTTMVCVAVNGKPVLGVIHKPFSEYTAWAMVDGGSNVKARTSYNEKTPRIVVSRSHSGMVKQVALQTFGNQTTIIPAGGAGYKVLALLDVPDKSQEKADLYIHVTYIKKWDICAGNAILKALGGHMTTLSGEEISYTGSDGIEGGLLASIRMNHQALVRKLPDLEKTGHK</sequence>
<keyword id="KW-0007">Acetylation</keyword>
<keyword id="KW-0325">Glycoprotein</keyword>
<keyword id="KW-0333">Golgi apparatus</keyword>
<keyword id="KW-0378">Hydrolase</keyword>
<keyword id="KW-0460">Magnesium</keyword>
<keyword id="KW-0472">Membrane</keyword>
<keyword id="KW-0479">Metal-binding</keyword>
<keyword id="KW-1185">Reference proteome</keyword>
<keyword id="KW-0735">Signal-anchor</keyword>
<keyword id="KW-0812">Transmembrane</keyword>
<keyword id="KW-1133">Transmembrane helix</keyword>
<organism>
    <name type="scientific">Bos taurus</name>
    <name type="common">Bovine</name>
    <dbReference type="NCBI Taxonomy" id="9913"/>
    <lineage>
        <taxon>Eukaryota</taxon>
        <taxon>Metazoa</taxon>
        <taxon>Chordata</taxon>
        <taxon>Craniata</taxon>
        <taxon>Vertebrata</taxon>
        <taxon>Euteleostomi</taxon>
        <taxon>Mammalia</taxon>
        <taxon>Eutheria</taxon>
        <taxon>Laurasiatheria</taxon>
        <taxon>Artiodactyla</taxon>
        <taxon>Ruminantia</taxon>
        <taxon>Pecora</taxon>
        <taxon>Bovidae</taxon>
        <taxon>Bovinae</taxon>
        <taxon>Bos</taxon>
    </lineage>
</organism>
<accession>Q2KJ53</accession>